<reference key="1">
    <citation type="journal article" date="2004" name="Genome Res.">
        <title>Genome sequence of Haloarcula marismortui: a halophilic archaeon from the Dead Sea.</title>
        <authorList>
            <person name="Baliga N.S."/>
            <person name="Bonneau R."/>
            <person name="Facciotti M.T."/>
            <person name="Pan M."/>
            <person name="Glusman G."/>
            <person name="Deutsch E.W."/>
            <person name="Shannon P."/>
            <person name="Chiu Y."/>
            <person name="Weng R.S."/>
            <person name="Gan R.R."/>
            <person name="Hung P."/>
            <person name="Date S.V."/>
            <person name="Marcotte E."/>
            <person name="Hood L."/>
            <person name="Ng W.V."/>
        </authorList>
    </citation>
    <scope>NUCLEOTIDE SEQUENCE [LARGE SCALE GENOMIC DNA]</scope>
    <source>
        <strain>ATCC 43049 / DSM 3752 / JCM 8966 / VKM B-1809</strain>
    </source>
</reference>
<dbReference type="EC" id="4.1.99.17" evidence="1"/>
<dbReference type="EMBL" id="AY596297">
    <property type="protein sequence ID" value="AAV46132.1"/>
    <property type="molecule type" value="Genomic_DNA"/>
</dbReference>
<dbReference type="RefSeq" id="WP_011223485.1">
    <property type="nucleotide sequence ID" value="NC_006396.1"/>
</dbReference>
<dbReference type="SMR" id="Q5V2X0"/>
<dbReference type="STRING" id="272569.rrnAC1182"/>
<dbReference type="PaxDb" id="272569-rrnAC1182"/>
<dbReference type="EnsemblBacteria" id="AAV46132">
    <property type="protein sequence ID" value="AAV46132"/>
    <property type="gene ID" value="rrnAC1182"/>
</dbReference>
<dbReference type="GeneID" id="40152177"/>
<dbReference type="KEGG" id="hma:rrnAC1182"/>
<dbReference type="PATRIC" id="fig|272569.17.peg.1899"/>
<dbReference type="eggNOG" id="arCOG02741">
    <property type="taxonomic scope" value="Archaea"/>
</dbReference>
<dbReference type="HOGENOM" id="CLU_013181_2_1_2"/>
<dbReference type="UniPathway" id="UPA00060"/>
<dbReference type="Proteomes" id="UP000001169">
    <property type="component" value="Chromosome I"/>
</dbReference>
<dbReference type="GO" id="GO:0051539">
    <property type="term" value="F:4 iron, 4 sulfur cluster binding"/>
    <property type="evidence" value="ECO:0007669"/>
    <property type="project" value="UniProtKB-KW"/>
</dbReference>
<dbReference type="GO" id="GO:0016830">
    <property type="term" value="F:carbon-carbon lyase activity"/>
    <property type="evidence" value="ECO:0007669"/>
    <property type="project" value="InterPro"/>
</dbReference>
<dbReference type="GO" id="GO:0008270">
    <property type="term" value="F:zinc ion binding"/>
    <property type="evidence" value="ECO:0007669"/>
    <property type="project" value="UniProtKB-UniRule"/>
</dbReference>
<dbReference type="GO" id="GO:0009228">
    <property type="term" value="P:thiamine biosynthetic process"/>
    <property type="evidence" value="ECO:0007669"/>
    <property type="project" value="UniProtKB-KW"/>
</dbReference>
<dbReference type="GO" id="GO:0009229">
    <property type="term" value="P:thiamine diphosphate biosynthetic process"/>
    <property type="evidence" value="ECO:0007669"/>
    <property type="project" value="UniProtKB-UniRule"/>
</dbReference>
<dbReference type="FunFam" id="3.20.20.540:FF:000001">
    <property type="entry name" value="Phosphomethylpyrimidine synthase"/>
    <property type="match status" value="1"/>
</dbReference>
<dbReference type="Gene3D" id="6.10.250.620">
    <property type="match status" value="1"/>
</dbReference>
<dbReference type="Gene3D" id="3.20.20.540">
    <property type="entry name" value="Radical SAM ThiC family, central domain"/>
    <property type="match status" value="1"/>
</dbReference>
<dbReference type="HAMAP" id="MF_00089">
    <property type="entry name" value="ThiC"/>
    <property type="match status" value="1"/>
</dbReference>
<dbReference type="InterPro" id="IPR037509">
    <property type="entry name" value="ThiC"/>
</dbReference>
<dbReference type="InterPro" id="IPR038521">
    <property type="entry name" value="ThiC/Bza_core_dom"/>
</dbReference>
<dbReference type="InterPro" id="IPR002817">
    <property type="entry name" value="ThiC/BzaA/B"/>
</dbReference>
<dbReference type="NCBIfam" id="NF006763">
    <property type="entry name" value="PRK09284.1"/>
    <property type="match status" value="1"/>
</dbReference>
<dbReference type="NCBIfam" id="NF009895">
    <property type="entry name" value="PRK13352.1"/>
    <property type="match status" value="1"/>
</dbReference>
<dbReference type="NCBIfam" id="TIGR00190">
    <property type="entry name" value="thiC"/>
    <property type="match status" value="1"/>
</dbReference>
<dbReference type="PANTHER" id="PTHR30557:SF1">
    <property type="entry name" value="PHOSPHOMETHYLPYRIMIDINE SYNTHASE, CHLOROPLASTIC"/>
    <property type="match status" value="1"/>
</dbReference>
<dbReference type="PANTHER" id="PTHR30557">
    <property type="entry name" value="THIAMINE BIOSYNTHESIS PROTEIN THIC"/>
    <property type="match status" value="1"/>
</dbReference>
<dbReference type="Pfam" id="PF01964">
    <property type="entry name" value="ThiC_Rad_SAM"/>
    <property type="match status" value="1"/>
</dbReference>
<dbReference type="SFLD" id="SFLDF00407">
    <property type="entry name" value="phosphomethylpyrimidine_syntha"/>
    <property type="match status" value="1"/>
</dbReference>
<dbReference type="SFLD" id="SFLDG01114">
    <property type="entry name" value="phosphomethylpyrimidine_syntha"/>
    <property type="match status" value="1"/>
</dbReference>
<dbReference type="SFLD" id="SFLDS00113">
    <property type="entry name" value="Radical_SAM_Phosphomethylpyrim"/>
    <property type="match status" value="1"/>
</dbReference>
<sequence length="480" mass="52090">MTQMAAARNGTVTEEMERVAEREGVDPAFVRQQVADGQAVIPANVGHDSLDPMIIGREFATKVNANIGNSEETSDIEGELEKLHTAVHYGADTVMDLSTGRNLDEIRSANVTHSPVPVGTVPIYEAVKRASDPSEITHELLLDVIEKQAKQGVDYMTIHAGVRMEHLPLTDGRKTGIVSRGGSILAKWIEENGMENPLYTKFEAICEIFREYDVTFSLGDGLRPGCLADAGDDAQFAELDTLGELTRTAWKHDVQVMVEGPGHVPMDQVAEQVERQQEVCDGAPFYVLGPLVTDVAPGYDHITSAIGATEAGRAGAAMLCYVTPKEHLGLPEKSDVRDGLAAYRIAAHAADVANGREGARDWDDALSEARYAFDWREQFDLALDPDRAREYHDQTLPGDNYKEARFCSMCGVEFCSMRIDQDARSDGDMESIEADADDRTPLEDSSAAAVNRPPVGTHDGADIPGPDADMPADTEGSADD</sequence>
<feature type="chain" id="PRO_0000152858" description="Phosphomethylpyrimidine synthase">
    <location>
        <begin position="1"/>
        <end position="480"/>
    </location>
</feature>
<feature type="region of interest" description="Disordered" evidence="2">
    <location>
        <begin position="426"/>
        <end position="480"/>
    </location>
</feature>
<feature type="compositionally biased region" description="Acidic residues" evidence="2">
    <location>
        <begin position="470"/>
        <end position="480"/>
    </location>
</feature>
<feature type="binding site" evidence="1">
    <location>
        <position position="66"/>
    </location>
    <ligand>
        <name>substrate</name>
    </ligand>
</feature>
<feature type="binding site" evidence="1">
    <location>
        <position position="95"/>
    </location>
    <ligand>
        <name>substrate</name>
    </ligand>
</feature>
<feature type="binding site" evidence="1">
    <location>
        <position position="124"/>
    </location>
    <ligand>
        <name>substrate</name>
    </ligand>
</feature>
<feature type="binding site" evidence="1">
    <location>
        <position position="159"/>
    </location>
    <ligand>
        <name>substrate</name>
    </ligand>
</feature>
<feature type="binding site" evidence="1">
    <location>
        <begin position="179"/>
        <end position="181"/>
    </location>
    <ligand>
        <name>substrate</name>
    </ligand>
</feature>
<feature type="binding site" evidence="1">
    <location>
        <begin position="220"/>
        <end position="223"/>
    </location>
    <ligand>
        <name>substrate</name>
    </ligand>
</feature>
<feature type="binding site" evidence="1">
    <location>
        <position position="259"/>
    </location>
    <ligand>
        <name>substrate</name>
    </ligand>
</feature>
<feature type="binding site" evidence="1">
    <location>
        <position position="263"/>
    </location>
    <ligand>
        <name>Zn(2+)</name>
        <dbReference type="ChEBI" id="CHEBI:29105"/>
    </ligand>
</feature>
<feature type="binding site" evidence="1">
    <location>
        <position position="286"/>
    </location>
    <ligand>
        <name>substrate</name>
    </ligand>
</feature>
<feature type="binding site" evidence="1">
    <location>
        <position position="327"/>
    </location>
    <ligand>
        <name>Zn(2+)</name>
        <dbReference type="ChEBI" id="CHEBI:29105"/>
    </ligand>
</feature>
<feature type="binding site" evidence="1">
    <location>
        <position position="407"/>
    </location>
    <ligand>
        <name>[4Fe-4S] cluster</name>
        <dbReference type="ChEBI" id="CHEBI:49883"/>
        <note>4Fe-4S-S-AdoMet</note>
    </ligand>
</feature>
<feature type="binding site" evidence="1">
    <location>
        <position position="410"/>
    </location>
    <ligand>
        <name>[4Fe-4S] cluster</name>
        <dbReference type="ChEBI" id="CHEBI:49883"/>
        <note>4Fe-4S-S-AdoMet</note>
    </ligand>
</feature>
<feature type="binding site" evidence="1">
    <location>
        <position position="415"/>
    </location>
    <ligand>
        <name>[4Fe-4S] cluster</name>
        <dbReference type="ChEBI" id="CHEBI:49883"/>
        <note>4Fe-4S-S-AdoMet</note>
    </ligand>
</feature>
<name>THIC_HALMA</name>
<protein>
    <recommendedName>
        <fullName evidence="1">Phosphomethylpyrimidine synthase</fullName>
        <ecNumber evidence="1">4.1.99.17</ecNumber>
    </recommendedName>
    <alternativeName>
        <fullName evidence="1">Hydroxymethylpyrimidine phosphate synthase</fullName>
        <shortName evidence="1">HMP-P synthase</shortName>
        <shortName evidence="1">HMP-phosphate synthase</shortName>
        <shortName evidence="1">HMPP synthase</shortName>
    </alternativeName>
    <alternativeName>
        <fullName evidence="1">Thiamine biosynthesis protein ThiC</fullName>
    </alternativeName>
</protein>
<organism>
    <name type="scientific">Haloarcula marismortui (strain ATCC 43049 / DSM 3752 / JCM 8966 / VKM B-1809)</name>
    <name type="common">Halobacterium marismortui</name>
    <dbReference type="NCBI Taxonomy" id="272569"/>
    <lineage>
        <taxon>Archaea</taxon>
        <taxon>Methanobacteriati</taxon>
        <taxon>Methanobacteriota</taxon>
        <taxon>Stenosarchaea group</taxon>
        <taxon>Halobacteria</taxon>
        <taxon>Halobacteriales</taxon>
        <taxon>Haloarculaceae</taxon>
        <taxon>Haloarcula</taxon>
    </lineage>
</organism>
<gene>
    <name evidence="1" type="primary">thiC</name>
    <name type="ordered locus">rrnAC1182</name>
</gene>
<proteinExistence type="inferred from homology"/>
<comment type="function">
    <text evidence="1">Catalyzes the synthesis of the hydroxymethylpyrimidine phosphate (HMP-P) moiety of thiamine from aminoimidazole ribotide (AIR) in a radical S-adenosyl-L-methionine (SAM)-dependent reaction.</text>
</comment>
<comment type="catalytic activity">
    <reaction evidence="1">
        <text>5-amino-1-(5-phospho-beta-D-ribosyl)imidazole + S-adenosyl-L-methionine = 4-amino-2-methyl-5-(phosphooxymethyl)pyrimidine + CO + 5'-deoxyadenosine + formate + L-methionine + 3 H(+)</text>
        <dbReference type="Rhea" id="RHEA:24840"/>
        <dbReference type="ChEBI" id="CHEBI:15378"/>
        <dbReference type="ChEBI" id="CHEBI:15740"/>
        <dbReference type="ChEBI" id="CHEBI:17245"/>
        <dbReference type="ChEBI" id="CHEBI:17319"/>
        <dbReference type="ChEBI" id="CHEBI:57844"/>
        <dbReference type="ChEBI" id="CHEBI:58354"/>
        <dbReference type="ChEBI" id="CHEBI:59789"/>
        <dbReference type="ChEBI" id="CHEBI:137981"/>
        <dbReference type="EC" id="4.1.99.17"/>
    </reaction>
</comment>
<comment type="cofactor">
    <cofactor evidence="1">
        <name>[4Fe-4S] cluster</name>
        <dbReference type="ChEBI" id="CHEBI:49883"/>
    </cofactor>
    <text evidence="1">Binds 1 [4Fe-4S] cluster per subunit. The cluster is coordinated with 3 cysteines and an exchangeable S-adenosyl-L-methionine.</text>
</comment>
<comment type="pathway">
    <text evidence="1">Cofactor biosynthesis; thiamine diphosphate biosynthesis.</text>
</comment>
<comment type="similarity">
    <text evidence="1">Belongs to the ThiC family.</text>
</comment>
<accession>Q5V2X0</accession>
<keyword id="KW-0004">4Fe-4S</keyword>
<keyword id="KW-0408">Iron</keyword>
<keyword id="KW-0411">Iron-sulfur</keyword>
<keyword id="KW-0456">Lyase</keyword>
<keyword id="KW-0479">Metal-binding</keyword>
<keyword id="KW-1185">Reference proteome</keyword>
<keyword id="KW-0949">S-adenosyl-L-methionine</keyword>
<keyword id="KW-0784">Thiamine biosynthesis</keyword>
<keyword id="KW-0862">Zinc</keyword>
<evidence type="ECO:0000255" key="1">
    <source>
        <dbReference type="HAMAP-Rule" id="MF_00089"/>
    </source>
</evidence>
<evidence type="ECO:0000256" key="2">
    <source>
        <dbReference type="SAM" id="MobiDB-lite"/>
    </source>
</evidence>